<sequence length="546" mass="58223">MLSILLENPLLVLFLVAAIGYPLGRIKIRGSSLGVAAVLFVGLAMGSLHPELKLPEIVYVLGLALFVYTIGLSSGPAFVASLKREGIRNNALIIGMLLVAAGLVVGAQRLLGFKGTVTAGLFAGSLTNTPALAGALETIKHIASPELRELLLAEPVVGYSVAYPMGVMGVVLAISLVQKLWNVDYGEEGKRLRLAGTASEALRSMTVRIAWPGAGRHTVAELARHEKWDVIFGRIRRGDSYLLTGPQVRFQPGDLVTAVGTETELRRVAAFLGEVSEEEITVDRSEYDYRRIFVSNPRVAGRQLGELNLFENYGATVTRVRRGDDDFLPHDDMVLELGDRVRVVTHRDHMAEVTAFFGDSYRAVSEVDILTFSLGLALGLLLGIIPIPLPGGITLKLGFAGGPLIVALILGTIGRSGSMVWSLPYSANMTLRQIGLVLFLAGVGTRAGYGFVTTLAKGGGLAIFAAGAVVTCLTALATLWIGHKLMKIPMSILIGMVAGLQTQPAVLGYALEQTGNDLPNIGYASVYPVATISKILIVQILLTMLM</sequence>
<organism>
    <name type="scientific">Geobacter sulfurreducens (strain ATCC 51573 / DSM 12127 / PCA)</name>
    <dbReference type="NCBI Taxonomy" id="243231"/>
    <lineage>
        <taxon>Bacteria</taxon>
        <taxon>Pseudomonadati</taxon>
        <taxon>Thermodesulfobacteriota</taxon>
        <taxon>Desulfuromonadia</taxon>
        <taxon>Geobacterales</taxon>
        <taxon>Geobacteraceae</taxon>
        <taxon>Geobacter</taxon>
    </lineage>
</organism>
<feature type="chain" id="PRO_0000208774" description="Uncharacterized transporter GSU1016">
    <location>
        <begin position="1"/>
        <end position="546"/>
    </location>
</feature>
<feature type="transmembrane region" description="Helical" evidence="1">
    <location>
        <begin position="4"/>
        <end position="23"/>
    </location>
</feature>
<feature type="transmembrane region" description="Helical" evidence="1">
    <location>
        <begin position="30"/>
        <end position="47"/>
    </location>
</feature>
<feature type="transmembrane region" description="Helical" evidence="1">
    <location>
        <begin position="57"/>
        <end position="79"/>
    </location>
</feature>
<feature type="transmembrane region" description="Helical" evidence="1">
    <location>
        <begin position="91"/>
        <end position="113"/>
    </location>
</feature>
<feature type="transmembrane region" description="Helical" evidence="1">
    <location>
        <begin position="155"/>
        <end position="177"/>
    </location>
</feature>
<feature type="transmembrane region" description="Helical" evidence="1">
    <location>
        <begin position="372"/>
        <end position="394"/>
    </location>
</feature>
<feature type="transmembrane region" description="Helical" evidence="1">
    <location>
        <begin position="399"/>
        <end position="421"/>
    </location>
</feature>
<feature type="transmembrane region" description="Helical" evidence="1">
    <location>
        <begin position="434"/>
        <end position="456"/>
    </location>
</feature>
<feature type="transmembrane region" description="Helical" evidence="1">
    <location>
        <begin position="460"/>
        <end position="482"/>
    </location>
</feature>
<feature type="transmembrane region" description="Helical" evidence="1">
    <location>
        <begin position="489"/>
        <end position="511"/>
    </location>
</feature>
<feature type="transmembrane region" description="Helical" evidence="1">
    <location>
        <begin position="521"/>
        <end position="543"/>
    </location>
</feature>
<feature type="domain" description="RCK C-terminal 1" evidence="2">
    <location>
        <begin position="189"/>
        <end position="274"/>
    </location>
</feature>
<feature type="domain" description="RCK C-terminal 2" evidence="2">
    <location>
        <begin position="275"/>
        <end position="359"/>
    </location>
</feature>
<comment type="subcellular location">
    <subcellularLocation>
        <location evidence="3">Cell membrane</location>
        <topology evidence="3">Multi-pass membrane protein</topology>
    </subcellularLocation>
</comment>
<comment type="similarity">
    <text evidence="3">Belongs to the AAE transporter (TC 2.A.81) family.</text>
</comment>
<evidence type="ECO:0000255" key="1"/>
<evidence type="ECO:0000255" key="2">
    <source>
        <dbReference type="PROSITE-ProRule" id="PRU00544"/>
    </source>
</evidence>
<evidence type="ECO:0000305" key="3"/>
<proteinExistence type="inferred from homology"/>
<dbReference type="EMBL" id="AE017180">
    <property type="protein sequence ID" value="AAR34343.1"/>
    <property type="molecule type" value="Genomic_DNA"/>
</dbReference>
<dbReference type="RefSeq" id="NP_952070.1">
    <property type="nucleotide sequence ID" value="NC_002939.5"/>
</dbReference>
<dbReference type="RefSeq" id="WP_010941681.1">
    <property type="nucleotide sequence ID" value="NC_002939.5"/>
</dbReference>
<dbReference type="SMR" id="Q74EE6"/>
<dbReference type="FunCoup" id="Q74EE6">
    <property type="interactions" value="33"/>
</dbReference>
<dbReference type="STRING" id="243231.GSU1016"/>
<dbReference type="EnsemblBacteria" id="AAR34343">
    <property type="protein sequence ID" value="AAR34343"/>
    <property type="gene ID" value="GSU1016"/>
</dbReference>
<dbReference type="KEGG" id="gsu:GSU1016"/>
<dbReference type="PATRIC" id="fig|243231.5.peg.1018"/>
<dbReference type="eggNOG" id="COG0569">
    <property type="taxonomic scope" value="Bacteria"/>
</dbReference>
<dbReference type="eggNOG" id="COG2985">
    <property type="taxonomic scope" value="Bacteria"/>
</dbReference>
<dbReference type="HOGENOM" id="CLU_035023_3_0_7"/>
<dbReference type="InParanoid" id="Q74EE6"/>
<dbReference type="OrthoDB" id="9155749at2"/>
<dbReference type="Proteomes" id="UP000000577">
    <property type="component" value="Chromosome"/>
</dbReference>
<dbReference type="GO" id="GO:0005886">
    <property type="term" value="C:plasma membrane"/>
    <property type="evidence" value="ECO:0000318"/>
    <property type="project" value="GO_Central"/>
</dbReference>
<dbReference type="GO" id="GO:0008324">
    <property type="term" value="F:monoatomic cation transmembrane transporter activity"/>
    <property type="evidence" value="ECO:0007669"/>
    <property type="project" value="InterPro"/>
</dbReference>
<dbReference type="GO" id="GO:0006813">
    <property type="term" value="P:potassium ion transport"/>
    <property type="evidence" value="ECO:0007669"/>
    <property type="project" value="InterPro"/>
</dbReference>
<dbReference type="Gene3D" id="3.30.70.1450">
    <property type="entry name" value="Regulator of K+ conductance, C-terminal domain"/>
    <property type="match status" value="2"/>
</dbReference>
<dbReference type="InterPro" id="IPR050144">
    <property type="entry name" value="AAE_transporter"/>
</dbReference>
<dbReference type="InterPro" id="IPR006037">
    <property type="entry name" value="RCK_C"/>
</dbReference>
<dbReference type="InterPro" id="IPR036721">
    <property type="entry name" value="RCK_C_sf"/>
</dbReference>
<dbReference type="InterPro" id="IPR006512">
    <property type="entry name" value="YidE_YbjL"/>
</dbReference>
<dbReference type="NCBIfam" id="TIGR01625">
    <property type="entry name" value="YidE_YbjL_dupl"/>
    <property type="match status" value="2"/>
</dbReference>
<dbReference type="PANTHER" id="PTHR30445">
    <property type="entry name" value="K(+)_H(+) ANTIPORTER SUBUNIT KHTT"/>
    <property type="match status" value="1"/>
</dbReference>
<dbReference type="PANTHER" id="PTHR30445:SF3">
    <property type="entry name" value="TRANSPORT PROTEIN YIDE-RELATED"/>
    <property type="match status" value="1"/>
</dbReference>
<dbReference type="Pfam" id="PF06826">
    <property type="entry name" value="Asp-Al_Ex"/>
    <property type="match status" value="2"/>
</dbReference>
<dbReference type="Pfam" id="PF02080">
    <property type="entry name" value="TrkA_C"/>
    <property type="match status" value="1"/>
</dbReference>
<dbReference type="SUPFAM" id="SSF116726">
    <property type="entry name" value="TrkA C-terminal domain-like"/>
    <property type="match status" value="2"/>
</dbReference>
<dbReference type="PROSITE" id="PS51202">
    <property type="entry name" value="RCK_C"/>
    <property type="match status" value="2"/>
</dbReference>
<gene>
    <name type="ordered locus">GSU1016</name>
</gene>
<protein>
    <recommendedName>
        <fullName>Uncharacterized transporter GSU1016</fullName>
    </recommendedName>
</protein>
<keyword id="KW-1003">Cell membrane</keyword>
<keyword id="KW-0472">Membrane</keyword>
<keyword id="KW-1185">Reference proteome</keyword>
<keyword id="KW-0677">Repeat</keyword>
<keyword id="KW-0812">Transmembrane</keyword>
<keyword id="KW-1133">Transmembrane helix</keyword>
<keyword id="KW-0813">Transport</keyword>
<name>Y1016_GEOSL</name>
<reference key="1">
    <citation type="journal article" date="2003" name="Science">
        <title>Genome of Geobacter sulfurreducens: metal reduction in subsurface environments.</title>
        <authorList>
            <person name="Methe B.A."/>
            <person name="Nelson K.E."/>
            <person name="Eisen J.A."/>
            <person name="Paulsen I.T."/>
            <person name="Nelson W.C."/>
            <person name="Heidelberg J.F."/>
            <person name="Wu D."/>
            <person name="Wu M."/>
            <person name="Ward N.L."/>
            <person name="Beanan M.J."/>
            <person name="Dodson R.J."/>
            <person name="Madupu R."/>
            <person name="Brinkac L.M."/>
            <person name="Daugherty S.C."/>
            <person name="DeBoy R.T."/>
            <person name="Durkin A.S."/>
            <person name="Gwinn M.L."/>
            <person name="Kolonay J.F."/>
            <person name="Sullivan S.A."/>
            <person name="Haft D.H."/>
            <person name="Selengut J."/>
            <person name="Davidsen T.M."/>
            <person name="Zafar N."/>
            <person name="White O."/>
            <person name="Tran B."/>
            <person name="Romero C."/>
            <person name="Forberger H.A."/>
            <person name="Weidman J.F."/>
            <person name="Khouri H.M."/>
            <person name="Feldblyum T.V."/>
            <person name="Utterback T.R."/>
            <person name="Van Aken S.E."/>
            <person name="Lovley D.R."/>
            <person name="Fraser C.M."/>
        </authorList>
    </citation>
    <scope>NUCLEOTIDE SEQUENCE [LARGE SCALE GENOMIC DNA]</scope>
    <source>
        <strain>ATCC 51573 / DSM 12127 / PCA</strain>
    </source>
</reference>
<accession>Q74EE6</accession>